<feature type="chain" id="PRO_1000165173" description="N-acetyl-D-glucosamine kinase">
    <location>
        <begin position="1"/>
        <end position="303"/>
    </location>
</feature>
<feature type="binding site" evidence="1">
    <location>
        <begin position="4"/>
        <end position="11"/>
    </location>
    <ligand>
        <name>ATP</name>
        <dbReference type="ChEBI" id="CHEBI:30616"/>
    </ligand>
</feature>
<feature type="binding site" evidence="1">
    <location>
        <begin position="133"/>
        <end position="140"/>
    </location>
    <ligand>
        <name>ATP</name>
        <dbReference type="ChEBI" id="CHEBI:30616"/>
    </ligand>
</feature>
<feature type="binding site" evidence="1">
    <location>
        <position position="157"/>
    </location>
    <ligand>
        <name>Zn(2+)</name>
        <dbReference type="ChEBI" id="CHEBI:29105"/>
    </ligand>
</feature>
<feature type="binding site" evidence="1">
    <location>
        <position position="177"/>
    </location>
    <ligand>
        <name>Zn(2+)</name>
        <dbReference type="ChEBI" id="CHEBI:29105"/>
    </ligand>
</feature>
<feature type="binding site" evidence="1">
    <location>
        <position position="179"/>
    </location>
    <ligand>
        <name>Zn(2+)</name>
        <dbReference type="ChEBI" id="CHEBI:29105"/>
    </ligand>
</feature>
<feature type="binding site" evidence="1">
    <location>
        <position position="184"/>
    </location>
    <ligand>
        <name>Zn(2+)</name>
        <dbReference type="ChEBI" id="CHEBI:29105"/>
    </ligand>
</feature>
<name>NAGK_ECO55</name>
<protein>
    <recommendedName>
        <fullName evidence="1">N-acetyl-D-glucosamine kinase</fullName>
        <ecNumber evidence="1">2.7.1.59</ecNumber>
    </recommendedName>
    <alternativeName>
        <fullName evidence="1">GlcNAc kinase</fullName>
    </alternativeName>
</protein>
<proteinExistence type="inferred from homology"/>
<keyword id="KW-0067">ATP-binding</keyword>
<keyword id="KW-0119">Carbohydrate metabolism</keyword>
<keyword id="KW-0418">Kinase</keyword>
<keyword id="KW-0479">Metal-binding</keyword>
<keyword id="KW-0547">Nucleotide-binding</keyword>
<keyword id="KW-1185">Reference proteome</keyword>
<keyword id="KW-0808">Transferase</keyword>
<keyword id="KW-0862">Zinc</keyword>
<evidence type="ECO:0000255" key="1">
    <source>
        <dbReference type="HAMAP-Rule" id="MF_01271"/>
    </source>
</evidence>
<comment type="function">
    <text evidence="1">Catalyzes the phosphorylation of N-acetyl-D-glucosamine (GlcNAc) derived from cell-wall degradation, yielding GlcNAc-6-P.</text>
</comment>
<comment type="catalytic activity">
    <reaction evidence="1">
        <text>N-acetyl-D-glucosamine + ATP = N-acetyl-D-glucosamine 6-phosphate + ADP + H(+)</text>
        <dbReference type="Rhea" id="RHEA:17417"/>
        <dbReference type="ChEBI" id="CHEBI:15378"/>
        <dbReference type="ChEBI" id="CHEBI:30616"/>
        <dbReference type="ChEBI" id="CHEBI:57513"/>
        <dbReference type="ChEBI" id="CHEBI:456216"/>
        <dbReference type="ChEBI" id="CHEBI:506227"/>
        <dbReference type="EC" id="2.7.1.59"/>
    </reaction>
</comment>
<comment type="pathway">
    <text evidence="1">Cell wall biogenesis; peptidoglycan recycling.</text>
</comment>
<comment type="similarity">
    <text evidence="1">Belongs to the ROK (NagC/XylR) family. NagK subfamily.</text>
</comment>
<gene>
    <name evidence="1" type="primary">nagK</name>
    <name type="ordered locus">EC55989_1231</name>
</gene>
<accession>B7LG53</accession>
<dbReference type="EC" id="2.7.1.59" evidence="1"/>
<dbReference type="EMBL" id="CU928145">
    <property type="protein sequence ID" value="CAU97090.1"/>
    <property type="molecule type" value="Genomic_DNA"/>
</dbReference>
<dbReference type="RefSeq" id="WP_000291270.1">
    <property type="nucleotide sequence ID" value="NC_011748.1"/>
</dbReference>
<dbReference type="SMR" id="B7LG53"/>
<dbReference type="GeneID" id="75171243"/>
<dbReference type="KEGG" id="eck:EC55989_1231"/>
<dbReference type="HOGENOM" id="CLU_036604_0_3_6"/>
<dbReference type="UniPathway" id="UPA00544"/>
<dbReference type="Proteomes" id="UP000000746">
    <property type="component" value="Chromosome"/>
</dbReference>
<dbReference type="GO" id="GO:0005524">
    <property type="term" value="F:ATP binding"/>
    <property type="evidence" value="ECO:0007669"/>
    <property type="project" value="UniProtKB-UniRule"/>
</dbReference>
<dbReference type="GO" id="GO:0045127">
    <property type="term" value="F:N-acetylglucosamine kinase activity"/>
    <property type="evidence" value="ECO:0007669"/>
    <property type="project" value="UniProtKB-UniRule"/>
</dbReference>
<dbReference type="GO" id="GO:0008270">
    <property type="term" value="F:zinc ion binding"/>
    <property type="evidence" value="ECO:0007669"/>
    <property type="project" value="UniProtKB-UniRule"/>
</dbReference>
<dbReference type="GO" id="GO:0006044">
    <property type="term" value="P:N-acetylglucosamine metabolic process"/>
    <property type="evidence" value="ECO:0007669"/>
    <property type="project" value="UniProtKB-UniRule"/>
</dbReference>
<dbReference type="GO" id="GO:0009254">
    <property type="term" value="P:peptidoglycan turnover"/>
    <property type="evidence" value="ECO:0007669"/>
    <property type="project" value="UniProtKB-UniRule"/>
</dbReference>
<dbReference type="CDD" id="cd24057">
    <property type="entry name" value="ASKHA_NBD_ROK_NAGK"/>
    <property type="match status" value="1"/>
</dbReference>
<dbReference type="FunFam" id="3.30.420.40:FF:000049">
    <property type="entry name" value="N-acetyl-D-glucosamine kinase"/>
    <property type="match status" value="1"/>
</dbReference>
<dbReference type="FunFam" id="3.30.420.40:FF:000051">
    <property type="entry name" value="N-acetyl-D-glucosamine kinase"/>
    <property type="match status" value="1"/>
</dbReference>
<dbReference type="Gene3D" id="3.30.420.40">
    <property type="match status" value="2"/>
</dbReference>
<dbReference type="HAMAP" id="MF_01271">
    <property type="entry name" value="GlcNAc_kinase"/>
    <property type="match status" value="1"/>
</dbReference>
<dbReference type="InterPro" id="IPR043129">
    <property type="entry name" value="ATPase_NBD"/>
</dbReference>
<dbReference type="InterPro" id="IPR023505">
    <property type="entry name" value="N-acetyl-D-glucosamine_kinase"/>
</dbReference>
<dbReference type="InterPro" id="IPR000600">
    <property type="entry name" value="ROK"/>
</dbReference>
<dbReference type="InterPro" id="IPR049874">
    <property type="entry name" value="ROK_cs"/>
</dbReference>
<dbReference type="NCBIfam" id="NF009835">
    <property type="entry name" value="PRK13310.1"/>
    <property type="match status" value="1"/>
</dbReference>
<dbReference type="PANTHER" id="PTHR18964:SF162">
    <property type="entry name" value="N-ACETYL-D-GLUCOSAMINE KINASE"/>
    <property type="match status" value="1"/>
</dbReference>
<dbReference type="PANTHER" id="PTHR18964">
    <property type="entry name" value="ROK (REPRESSOR, ORF, KINASE) FAMILY"/>
    <property type="match status" value="1"/>
</dbReference>
<dbReference type="Pfam" id="PF00480">
    <property type="entry name" value="ROK"/>
    <property type="match status" value="1"/>
</dbReference>
<dbReference type="SUPFAM" id="SSF53067">
    <property type="entry name" value="Actin-like ATPase domain"/>
    <property type="match status" value="1"/>
</dbReference>
<dbReference type="PROSITE" id="PS01125">
    <property type="entry name" value="ROK"/>
    <property type="match status" value="1"/>
</dbReference>
<organism>
    <name type="scientific">Escherichia coli (strain 55989 / EAEC)</name>
    <dbReference type="NCBI Taxonomy" id="585055"/>
    <lineage>
        <taxon>Bacteria</taxon>
        <taxon>Pseudomonadati</taxon>
        <taxon>Pseudomonadota</taxon>
        <taxon>Gammaproteobacteria</taxon>
        <taxon>Enterobacterales</taxon>
        <taxon>Enterobacteriaceae</taxon>
        <taxon>Escherichia</taxon>
    </lineage>
</organism>
<sequence length="303" mass="33043">MYYGFDIGGTKIALGVFDSGRQLQWEKRVPTPRDSYDAFLDAVCELVAEADQRFGCKGSVGIGIPGMPETEDGTLYAANVPAASGKPLRADLSARLDRDVRLDNDANCFALSEAWDDEFTQYPLVMGLILGTGVGGGLIFNGKPITGKSYITGEFGHMRLPVDALTMMGLDFPLRRCGCGQHGCIENYLSGRGFAWLYQHYYHQPLQAPEIIALYDQGDEQARAHVERYLDLLAVCLGNILTIVDPDLVVIGGGLSNFPAITTQLADRLPRHLLPVARVPRIERARHGDAGGMRGAAFLHLTD</sequence>
<reference key="1">
    <citation type="journal article" date="2009" name="PLoS Genet.">
        <title>Organised genome dynamics in the Escherichia coli species results in highly diverse adaptive paths.</title>
        <authorList>
            <person name="Touchon M."/>
            <person name="Hoede C."/>
            <person name="Tenaillon O."/>
            <person name="Barbe V."/>
            <person name="Baeriswyl S."/>
            <person name="Bidet P."/>
            <person name="Bingen E."/>
            <person name="Bonacorsi S."/>
            <person name="Bouchier C."/>
            <person name="Bouvet O."/>
            <person name="Calteau A."/>
            <person name="Chiapello H."/>
            <person name="Clermont O."/>
            <person name="Cruveiller S."/>
            <person name="Danchin A."/>
            <person name="Diard M."/>
            <person name="Dossat C."/>
            <person name="Karoui M.E."/>
            <person name="Frapy E."/>
            <person name="Garry L."/>
            <person name="Ghigo J.M."/>
            <person name="Gilles A.M."/>
            <person name="Johnson J."/>
            <person name="Le Bouguenec C."/>
            <person name="Lescat M."/>
            <person name="Mangenot S."/>
            <person name="Martinez-Jehanne V."/>
            <person name="Matic I."/>
            <person name="Nassif X."/>
            <person name="Oztas S."/>
            <person name="Petit M.A."/>
            <person name="Pichon C."/>
            <person name="Rouy Z."/>
            <person name="Ruf C.S."/>
            <person name="Schneider D."/>
            <person name="Tourret J."/>
            <person name="Vacherie B."/>
            <person name="Vallenet D."/>
            <person name="Medigue C."/>
            <person name="Rocha E.P.C."/>
            <person name="Denamur E."/>
        </authorList>
    </citation>
    <scope>NUCLEOTIDE SEQUENCE [LARGE SCALE GENOMIC DNA]</scope>
    <source>
        <strain>55989 / EAEC</strain>
    </source>
</reference>